<keyword id="KW-1185">Reference proteome</keyword>
<keyword id="KW-0687">Ribonucleoprotein</keyword>
<keyword id="KW-0689">Ribosomal protein</keyword>
<name>RS10_KORVE</name>
<protein>
    <recommendedName>
        <fullName evidence="1">Small ribosomal subunit protein uS10</fullName>
    </recommendedName>
    <alternativeName>
        <fullName evidence="2">30S ribosomal protein S10</fullName>
    </alternativeName>
</protein>
<feature type="chain" id="PRO_0000258535" description="Small ribosomal subunit protein uS10">
    <location>
        <begin position="1"/>
        <end position="109"/>
    </location>
</feature>
<gene>
    <name evidence="1" type="primary">rpsJ</name>
    <name type="ordered locus">Acid345_1225</name>
</gene>
<evidence type="ECO:0000255" key="1">
    <source>
        <dbReference type="HAMAP-Rule" id="MF_00508"/>
    </source>
</evidence>
<evidence type="ECO:0000305" key="2"/>
<reference key="1">
    <citation type="journal article" date="2009" name="Appl. Environ. Microbiol.">
        <title>Three genomes from the phylum Acidobacteria provide insight into the lifestyles of these microorganisms in soils.</title>
        <authorList>
            <person name="Ward N.L."/>
            <person name="Challacombe J.F."/>
            <person name="Janssen P.H."/>
            <person name="Henrissat B."/>
            <person name="Coutinho P.M."/>
            <person name="Wu M."/>
            <person name="Xie G."/>
            <person name="Haft D.H."/>
            <person name="Sait M."/>
            <person name="Badger J."/>
            <person name="Barabote R.D."/>
            <person name="Bradley B."/>
            <person name="Brettin T.S."/>
            <person name="Brinkac L.M."/>
            <person name="Bruce D."/>
            <person name="Creasy T."/>
            <person name="Daugherty S.C."/>
            <person name="Davidsen T.M."/>
            <person name="DeBoy R.T."/>
            <person name="Detter J.C."/>
            <person name="Dodson R.J."/>
            <person name="Durkin A.S."/>
            <person name="Ganapathy A."/>
            <person name="Gwinn-Giglio M."/>
            <person name="Han C.S."/>
            <person name="Khouri H."/>
            <person name="Kiss H."/>
            <person name="Kothari S.P."/>
            <person name="Madupu R."/>
            <person name="Nelson K.E."/>
            <person name="Nelson W.C."/>
            <person name="Paulsen I."/>
            <person name="Penn K."/>
            <person name="Ren Q."/>
            <person name="Rosovitz M.J."/>
            <person name="Selengut J.D."/>
            <person name="Shrivastava S."/>
            <person name="Sullivan S.A."/>
            <person name="Tapia R."/>
            <person name="Thompson L.S."/>
            <person name="Watkins K.L."/>
            <person name="Yang Q."/>
            <person name="Yu C."/>
            <person name="Zafar N."/>
            <person name="Zhou L."/>
            <person name="Kuske C.R."/>
        </authorList>
    </citation>
    <scope>NUCLEOTIDE SEQUENCE [LARGE SCALE GENOMIC DNA]</scope>
    <source>
        <strain>Ellin345</strain>
    </source>
</reference>
<proteinExistence type="inferred from homology"/>
<dbReference type="EMBL" id="CP000360">
    <property type="protein sequence ID" value="ABF40227.1"/>
    <property type="status" value="ALT_INIT"/>
    <property type="molecule type" value="Genomic_DNA"/>
</dbReference>
<dbReference type="RefSeq" id="WP_049761751.1">
    <property type="nucleotide sequence ID" value="NC_008009.1"/>
</dbReference>
<dbReference type="SMR" id="Q1ISC3"/>
<dbReference type="STRING" id="204669.Acid345_1225"/>
<dbReference type="EnsemblBacteria" id="ABF40227">
    <property type="protein sequence ID" value="ABF40227"/>
    <property type="gene ID" value="Acid345_1225"/>
</dbReference>
<dbReference type="KEGG" id="aba:Acid345_1225"/>
<dbReference type="eggNOG" id="COG0051">
    <property type="taxonomic scope" value="Bacteria"/>
</dbReference>
<dbReference type="HOGENOM" id="CLU_122625_1_3_0"/>
<dbReference type="Proteomes" id="UP000002432">
    <property type="component" value="Chromosome"/>
</dbReference>
<dbReference type="GO" id="GO:1990904">
    <property type="term" value="C:ribonucleoprotein complex"/>
    <property type="evidence" value="ECO:0007669"/>
    <property type="project" value="UniProtKB-KW"/>
</dbReference>
<dbReference type="GO" id="GO:0005840">
    <property type="term" value="C:ribosome"/>
    <property type="evidence" value="ECO:0007669"/>
    <property type="project" value="UniProtKB-KW"/>
</dbReference>
<dbReference type="GO" id="GO:0003735">
    <property type="term" value="F:structural constituent of ribosome"/>
    <property type="evidence" value="ECO:0007669"/>
    <property type="project" value="InterPro"/>
</dbReference>
<dbReference type="GO" id="GO:0000049">
    <property type="term" value="F:tRNA binding"/>
    <property type="evidence" value="ECO:0007669"/>
    <property type="project" value="UniProtKB-UniRule"/>
</dbReference>
<dbReference type="GO" id="GO:0006412">
    <property type="term" value="P:translation"/>
    <property type="evidence" value="ECO:0007669"/>
    <property type="project" value="UniProtKB-UniRule"/>
</dbReference>
<dbReference type="FunFam" id="3.30.70.600:FF:000001">
    <property type="entry name" value="30S ribosomal protein S10"/>
    <property type="match status" value="1"/>
</dbReference>
<dbReference type="Gene3D" id="3.30.70.600">
    <property type="entry name" value="Ribosomal protein S10 domain"/>
    <property type="match status" value="1"/>
</dbReference>
<dbReference type="HAMAP" id="MF_00508">
    <property type="entry name" value="Ribosomal_uS10"/>
    <property type="match status" value="1"/>
</dbReference>
<dbReference type="InterPro" id="IPR001848">
    <property type="entry name" value="Ribosomal_uS10"/>
</dbReference>
<dbReference type="InterPro" id="IPR018268">
    <property type="entry name" value="Ribosomal_uS10_CS"/>
</dbReference>
<dbReference type="InterPro" id="IPR027486">
    <property type="entry name" value="Ribosomal_uS10_dom"/>
</dbReference>
<dbReference type="InterPro" id="IPR036838">
    <property type="entry name" value="Ribosomal_uS10_dom_sf"/>
</dbReference>
<dbReference type="NCBIfam" id="NF001861">
    <property type="entry name" value="PRK00596.1"/>
    <property type="match status" value="1"/>
</dbReference>
<dbReference type="NCBIfam" id="TIGR01049">
    <property type="entry name" value="rpsJ_bact"/>
    <property type="match status" value="1"/>
</dbReference>
<dbReference type="PANTHER" id="PTHR11700">
    <property type="entry name" value="30S RIBOSOMAL PROTEIN S10 FAMILY MEMBER"/>
    <property type="match status" value="1"/>
</dbReference>
<dbReference type="Pfam" id="PF00338">
    <property type="entry name" value="Ribosomal_S10"/>
    <property type="match status" value="1"/>
</dbReference>
<dbReference type="PRINTS" id="PR00971">
    <property type="entry name" value="RIBOSOMALS10"/>
</dbReference>
<dbReference type="SMART" id="SM01403">
    <property type="entry name" value="Ribosomal_S10"/>
    <property type="match status" value="1"/>
</dbReference>
<dbReference type="SUPFAM" id="SSF54999">
    <property type="entry name" value="Ribosomal protein S10"/>
    <property type="match status" value="1"/>
</dbReference>
<dbReference type="PROSITE" id="PS00361">
    <property type="entry name" value="RIBOSOMAL_S10"/>
    <property type="match status" value="1"/>
</dbReference>
<organism>
    <name type="scientific">Koribacter versatilis (strain Ellin345)</name>
    <dbReference type="NCBI Taxonomy" id="204669"/>
    <lineage>
        <taxon>Bacteria</taxon>
        <taxon>Pseudomonadati</taxon>
        <taxon>Acidobacteriota</taxon>
        <taxon>Terriglobia</taxon>
        <taxon>Terriglobales</taxon>
        <taxon>Candidatus Korobacteraceae</taxon>
        <taxon>Candidatus Korobacter</taxon>
    </lineage>
</organism>
<sequence length="109" mass="12407">MIGKERIRIRLKAYDYRVLDQSTGEIVDTARRTGAQIAGPIPLPTVKNKYCVLRSPHVDKKSREAFEIRTHKRLLDILEPTQQTVDALMKLDLPAGVDVEIKAFGKEHK</sequence>
<comment type="function">
    <text evidence="1">Involved in the binding of tRNA to the ribosomes.</text>
</comment>
<comment type="subunit">
    <text evidence="1">Part of the 30S ribosomal subunit.</text>
</comment>
<comment type="similarity">
    <text evidence="1">Belongs to the universal ribosomal protein uS10 family.</text>
</comment>
<comment type="sequence caution" evidence="2">
    <conflict type="erroneous initiation">
        <sequence resource="EMBL-CDS" id="ABF40227"/>
    </conflict>
</comment>
<accession>Q1ISC3</accession>